<dbReference type="EC" id="6.1.1.21" evidence="1"/>
<dbReference type="EMBL" id="AP009389">
    <property type="protein sequence ID" value="BAF59229.1"/>
    <property type="molecule type" value="Genomic_DNA"/>
</dbReference>
<dbReference type="SMR" id="A5D3E2"/>
<dbReference type="STRING" id="370438.PTH_1048"/>
<dbReference type="KEGG" id="pth:PTH_1048"/>
<dbReference type="eggNOG" id="COG0124">
    <property type="taxonomic scope" value="Bacteria"/>
</dbReference>
<dbReference type="HOGENOM" id="CLU_025113_1_1_9"/>
<dbReference type="Proteomes" id="UP000006556">
    <property type="component" value="Chromosome"/>
</dbReference>
<dbReference type="GO" id="GO:0005737">
    <property type="term" value="C:cytoplasm"/>
    <property type="evidence" value="ECO:0007669"/>
    <property type="project" value="UniProtKB-SubCell"/>
</dbReference>
<dbReference type="GO" id="GO:0005524">
    <property type="term" value="F:ATP binding"/>
    <property type="evidence" value="ECO:0007669"/>
    <property type="project" value="UniProtKB-UniRule"/>
</dbReference>
<dbReference type="GO" id="GO:0140096">
    <property type="term" value="F:catalytic activity, acting on a protein"/>
    <property type="evidence" value="ECO:0007669"/>
    <property type="project" value="UniProtKB-ARBA"/>
</dbReference>
<dbReference type="GO" id="GO:0004821">
    <property type="term" value="F:histidine-tRNA ligase activity"/>
    <property type="evidence" value="ECO:0007669"/>
    <property type="project" value="UniProtKB-UniRule"/>
</dbReference>
<dbReference type="GO" id="GO:0016740">
    <property type="term" value="F:transferase activity"/>
    <property type="evidence" value="ECO:0007669"/>
    <property type="project" value="UniProtKB-ARBA"/>
</dbReference>
<dbReference type="GO" id="GO:0006427">
    <property type="term" value="P:histidyl-tRNA aminoacylation"/>
    <property type="evidence" value="ECO:0007669"/>
    <property type="project" value="UniProtKB-UniRule"/>
</dbReference>
<dbReference type="CDD" id="cd00773">
    <property type="entry name" value="HisRS-like_core"/>
    <property type="match status" value="1"/>
</dbReference>
<dbReference type="CDD" id="cd00859">
    <property type="entry name" value="HisRS_anticodon"/>
    <property type="match status" value="1"/>
</dbReference>
<dbReference type="FunFam" id="3.30.930.10:FF:000005">
    <property type="entry name" value="Histidine--tRNA ligase"/>
    <property type="match status" value="1"/>
</dbReference>
<dbReference type="Gene3D" id="3.40.50.800">
    <property type="entry name" value="Anticodon-binding domain"/>
    <property type="match status" value="1"/>
</dbReference>
<dbReference type="Gene3D" id="3.30.930.10">
    <property type="entry name" value="Bira Bifunctional Protein, Domain 2"/>
    <property type="match status" value="1"/>
</dbReference>
<dbReference type="HAMAP" id="MF_00127">
    <property type="entry name" value="His_tRNA_synth"/>
    <property type="match status" value="1"/>
</dbReference>
<dbReference type="InterPro" id="IPR006195">
    <property type="entry name" value="aa-tRNA-synth_II"/>
</dbReference>
<dbReference type="InterPro" id="IPR045864">
    <property type="entry name" value="aa-tRNA-synth_II/BPL/LPL"/>
</dbReference>
<dbReference type="InterPro" id="IPR004154">
    <property type="entry name" value="Anticodon-bd"/>
</dbReference>
<dbReference type="InterPro" id="IPR036621">
    <property type="entry name" value="Anticodon-bd_dom_sf"/>
</dbReference>
<dbReference type="InterPro" id="IPR015807">
    <property type="entry name" value="His-tRNA-ligase"/>
</dbReference>
<dbReference type="InterPro" id="IPR041715">
    <property type="entry name" value="HisRS-like_core"/>
</dbReference>
<dbReference type="InterPro" id="IPR004516">
    <property type="entry name" value="HisRS/HisZ"/>
</dbReference>
<dbReference type="InterPro" id="IPR033656">
    <property type="entry name" value="HisRS_anticodon"/>
</dbReference>
<dbReference type="NCBIfam" id="TIGR00442">
    <property type="entry name" value="hisS"/>
    <property type="match status" value="1"/>
</dbReference>
<dbReference type="PANTHER" id="PTHR43707:SF1">
    <property type="entry name" value="HISTIDINE--TRNA LIGASE, MITOCHONDRIAL-RELATED"/>
    <property type="match status" value="1"/>
</dbReference>
<dbReference type="PANTHER" id="PTHR43707">
    <property type="entry name" value="HISTIDYL-TRNA SYNTHETASE"/>
    <property type="match status" value="1"/>
</dbReference>
<dbReference type="Pfam" id="PF03129">
    <property type="entry name" value="HGTP_anticodon"/>
    <property type="match status" value="1"/>
</dbReference>
<dbReference type="Pfam" id="PF13393">
    <property type="entry name" value="tRNA-synt_His"/>
    <property type="match status" value="1"/>
</dbReference>
<dbReference type="PIRSF" id="PIRSF001549">
    <property type="entry name" value="His-tRNA_synth"/>
    <property type="match status" value="1"/>
</dbReference>
<dbReference type="SUPFAM" id="SSF52954">
    <property type="entry name" value="Class II aaRS ABD-related"/>
    <property type="match status" value="1"/>
</dbReference>
<dbReference type="SUPFAM" id="SSF55681">
    <property type="entry name" value="Class II aaRS and biotin synthetases"/>
    <property type="match status" value="1"/>
</dbReference>
<dbReference type="PROSITE" id="PS50862">
    <property type="entry name" value="AA_TRNA_LIGASE_II"/>
    <property type="match status" value="1"/>
</dbReference>
<evidence type="ECO:0000255" key="1">
    <source>
        <dbReference type="HAMAP-Rule" id="MF_00127"/>
    </source>
</evidence>
<sequence>MLTTRPRGTNDILPGEVEKWQYIESQFRRICREYGYGEIRTPVFEHTELFLRGVGDTTDIVEKEMYTFTDRGGRSITLRPENTAPAVRAYLENRLYAGPQPVKLFYAGPMFRYDRPQAGRFRQFHQLGVEVFGSHDPAVDAEVMAMAMDFYGRLGLKNLELHINSVGCPVCRPLLRRRLQDYFRPHLERLCKNCRSRFDKNPLRVLDCKEAACAEIGADAPFAIDCLCESCLEHFEKVKKYLELLNVSYTVNRRLVRGLDYYTHTAFEVTARDIGAQSSIGGGGRYNGLVEVCGGPPTPGVGYALGLERIILALRQQGIGLPGESGPEVFLATAGQAVMPEAFGLLFRLRSAGISADKDYLDRSLKAQMKYAGKIGARYAVIIGESELKQGTVLVRDMAAGEQSAVKLDGVLQYLREKITGRKQS</sequence>
<proteinExistence type="inferred from homology"/>
<comment type="catalytic activity">
    <reaction evidence="1">
        <text>tRNA(His) + L-histidine + ATP = L-histidyl-tRNA(His) + AMP + diphosphate + H(+)</text>
        <dbReference type="Rhea" id="RHEA:17313"/>
        <dbReference type="Rhea" id="RHEA-COMP:9665"/>
        <dbReference type="Rhea" id="RHEA-COMP:9689"/>
        <dbReference type="ChEBI" id="CHEBI:15378"/>
        <dbReference type="ChEBI" id="CHEBI:30616"/>
        <dbReference type="ChEBI" id="CHEBI:33019"/>
        <dbReference type="ChEBI" id="CHEBI:57595"/>
        <dbReference type="ChEBI" id="CHEBI:78442"/>
        <dbReference type="ChEBI" id="CHEBI:78527"/>
        <dbReference type="ChEBI" id="CHEBI:456215"/>
        <dbReference type="EC" id="6.1.1.21"/>
    </reaction>
</comment>
<comment type="subunit">
    <text evidence="1">Homodimer.</text>
</comment>
<comment type="subcellular location">
    <subcellularLocation>
        <location evidence="1">Cytoplasm</location>
    </subcellularLocation>
</comment>
<comment type="similarity">
    <text evidence="1">Belongs to the class-II aminoacyl-tRNA synthetase family.</text>
</comment>
<accession>A5D3E2</accession>
<gene>
    <name evidence="1" type="primary">hisS</name>
    <name type="ordered locus">PTH_1048</name>
</gene>
<feature type="chain" id="PRO_1000076279" description="Histidine--tRNA ligase">
    <location>
        <begin position="1"/>
        <end position="425"/>
    </location>
</feature>
<keyword id="KW-0030">Aminoacyl-tRNA synthetase</keyword>
<keyword id="KW-0067">ATP-binding</keyword>
<keyword id="KW-0963">Cytoplasm</keyword>
<keyword id="KW-0436">Ligase</keyword>
<keyword id="KW-0547">Nucleotide-binding</keyword>
<keyword id="KW-0648">Protein biosynthesis</keyword>
<keyword id="KW-1185">Reference proteome</keyword>
<organism>
    <name type="scientific">Pelotomaculum thermopropionicum (strain DSM 13744 / JCM 10971 / SI)</name>
    <dbReference type="NCBI Taxonomy" id="370438"/>
    <lineage>
        <taxon>Bacteria</taxon>
        <taxon>Bacillati</taxon>
        <taxon>Bacillota</taxon>
        <taxon>Clostridia</taxon>
        <taxon>Eubacteriales</taxon>
        <taxon>Desulfotomaculaceae</taxon>
        <taxon>Pelotomaculum</taxon>
    </lineage>
</organism>
<protein>
    <recommendedName>
        <fullName evidence="1">Histidine--tRNA ligase</fullName>
        <ecNumber evidence="1">6.1.1.21</ecNumber>
    </recommendedName>
    <alternativeName>
        <fullName evidence="1">Histidyl-tRNA synthetase</fullName>
        <shortName evidence="1">HisRS</shortName>
    </alternativeName>
</protein>
<reference key="1">
    <citation type="journal article" date="2008" name="Genome Res.">
        <title>The genome of Pelotomaculum thermopropionicum reveals niche-associated evolution in anaerobic microbiota.</title>
        <authorList>
            <person name="Kosaka T."/>
            <person name="Kato S."/>
            <person name="Shimoyama T."/>
            <person name="Ishii S."/>
            <person name="Abe T."/>
            <person name="Watanabe K."/>
        </authorList>
    </citation>
    <scope>NUCLEOTIDE SEQUENCE [LARGE SCALE GENOMIC DNA]</scope>
    <source>
        <strain>DSM 13744 / JCM 10971 / SI</strain>
    </source>
</reference>
<name>SYH_PELTS</name>